<proteinExistence type="inferred from homology"/>
<keyword id="KW-0067">ATP-binding</keyword>
<keyword id="KW-0963">Cytoplasm</keyword>
<keyword id="KW-0315">Glutamine amidotransferase</keyword>
<keyword id="KW-0378">Hydrolase</keyword>
<keyword id="KW-0436">Ligase</keyword>
<keyword id="KW-0547">Nucleotide-binding</keyword>
<keyword id="KW-0658">Purine biosynthesis</keyword>
<comment type="function">
    <text evidence="1">Part of the phosphoribosylformylglycinamidine synthase complex involved in the purines biosynthetic pathway. Catalyzes the ATP-dependent conversion of formylglycinamide ribonucleotide (FGAR) and glutamine to yield formylglycinamidine ribonucleotide (FGAM) and glutamate. The FGAM synthase complex is composed of three subunits. PurQ produces an ammonia molecule by converting glutamine to glutamate. PurL transfers the ammonia molecule to FGAR to form FGAM in an ATP-dependent manner. PurS interacts with PurQ and PurL and is thought to assist in the transfer of the ammonia molecule from PurQ to PurL.</text>
</comment>
<comment type="catalytic activity">
    <reaction evidence="1">
        <text>N(2)-formyl-N(1)-(5-phospho-beta-D-ribosyl)glycinamide + L-glutamine + ATP + H2O = 2-formamido-N(1)-(5-O-phospho-beta-D-ribosyl)acetamidine + L-glutamate + ADP + phosphate + H(+)</text>
        <dbReference type="Rhea" id="RHEA:17129"/>
        <dbReference type="ChEBI" id="CHEBI:15377"/>
        <dbReference type="ChEBI" id="CHEBI:15378"/>
        <dbReference type="ChEBI" id="CHEBI:29985"/>
        <dbReference type="ChEBI" id="CHEBI:30616"/>
        <dbReference type="ChEBI" id="CHEBI:43474"/>
        <dbReference type="ChEBI" id="CHEBI:58359"/>
        <dbReference type="ChEBI" id="CHEBI:147286"/>
        <dbReference type="ChEBI" id="CHEBI:147287"/>
        <dbReference type="ChEBI" id="CHEBI:456216"/>
        <dbReference type="EC" id="6.3.5.3"/>
    </reaction>
</comment>
<comment type="catalytic activity">
    <reaction evidence="1">
        <text>L-glutamine + H2O = L-glutamate + NH4(+)</text>
        <dbReference type="Rhea" id="RHEA:15889"/>
        <dbReference type="ChEBI" id="CHEBI:15377"/>
        <dbReference type="ChEBI" id="CHEBI:28938"/>
        <dbReference type="ChEBI" id="CHEBI:29985"/>
        <dbReference type="ChEBI" id="CHEBI:58359"/>
        <dbReference type="EC" id="3.5.1.2"/>
    </reaction>
</comment>
<comment type="pathway">
    <text evidence="1">Purine metabolism; IMP biosynthesis via de novo pathway; 5-amino-1-(5-phospho-D-ribosyl)imidazole from N(2)-formyl-N(1)-(5-phospho-D-ribosyl)glycinamide: step 1/2.</text>
</comment>
<comment type="subunit">
    <text evidence="1">Part of the FGAM synthase complex composed of 1 PurL, 1 PurQ and 2 PurS subunits.</text>
</comment>
<comment type="subcellular location">
    <subcellularLocation>
        <location evidence="1">Cytoplasm</location>
    </subcellularLocation>
</comment>
<dbReference type="EC" id="6.3.5.3" evidence="1"/>
<dbReference type="EC" id="3.5.1.2" evidence="1"/>
<dbReference type="EMBL" id="CP000232">
    <property type="protein sequence ID" value="ABC20345.1"/>
    <property type="molecule type" value="Genomic_DNA"/>
</dbReference>
<dbReference type="RefSeq" id="YP_430888.1">
    <property type="nucleotide sequence ID" value="NC_007644.1"/>
</dbReference>
<dbReference type="SMR" id="Q2RGU4"/>
<dbReference type="STRING" id="264732.Moth_2049"/>
<dbReference type="EnsemblBacteria" id="ABC20345">
    <property type="protein sequence ID" value="ABC20345"/>
    <property type="gene ID" value="Moth_2049"/>
</dbReference>
<dbReference type="KEGG" id="mta:Moth_2049"/>
<dbReference type="PATRIC" id="fig|264732.11.peg.2225"/>
<dbReference type="eggNOG" id="COG0047">
    <property type="taxonomic scope" value="Bacteria"/>
</dbReference>
<dbReference type="HOGENOM" id="CLU_001031_3_1_9"/>
<dbReference type="OrthoDB" id="9804441at2"/>
<dbReference type="UniPathway" id="UPA00074">
    <property type="reaction ID" value="UER00128"/>
</dbReference>
<dbReference type="GO" id="GO:0005737">
    <property type="term" value="C:cytoplasm"/>
    <property type="evidence" value="ECO:0007669"/>
    <property type="project" value="UniProtKB-SubCell"/>
</dbReference>
<dbReference type="GO" id="GO:0005524">
    <property type="term" value="F:ATP binding"/>
    <property type="evidence" value="ECO:0007669"/>
    <property type="project" value="UniProtKB-KW"/>
</dbReference>
<dbReference type="GO" id="GO:0004359">
    <property type="term" value="F:glutaminase activity"/>
    <property type="evidence" value="ECO:0007669"/>
    <property type="project" value="UniProtKB-EC"/>
</dbReference>
<dbReference type="GO" id="GO:0004642">
    <property type="term" value="F:phosphoribosylformylglycinamidine synthase activity"/>
    <property type="evidence" value="ECO:0007669"/>
    <property type="project" value="UniProtKB-UniRule"/>
</dbReference>
<dbReference type="GO" id="GO:0006189">
    <property type="term" value="P:'de novo' IMP biosynthetic process"/>
    <property type="evidence" value="ECO:0007669"/>
    <property type="project" value="UniProtKB-UniRule"/>
</dbReference>
<dbReference type="CDD" id="cd01740">
    <property type="entry name" value="GATase1_FGAR_AT"/>
    <property type="match status" value="1"/>
</dbReference>
<dbReference type="Gene3D" id="3.40.50.880">
    <property type="match status" value="1"/>
</dbReference>
<dbReference type="HAMAP" id="MF_00421">
    <property type="entry name" value="PurQ"/>
    <property type="match status" value="1"/>
</dbReference>
<dbReference type="InterPro" id="IPR029062">
    <property type="entry name" value="Class_I_gatase-like"/>
</dbReference>
<dbReference type="InterPro" id="IPR010075">
    <property type="entry name" value="PRibForGlyAmidine_synth_PurQ"/>
</dbReference>
<dbReference type="NCBIfam" id="TIGR01737">
    <property type="entry name" value="FGAM_synth_I"/>
    <property type="match status" value="1"/>
</dbReference>
<dbReference type="NCBIfam" id="NF002957">
    <property type="entry name" value="PRK03619.1"/>
    <property type="match status" value="1"/>
</dbReference>
<dbReference type="PANTHER" id="PTHR47552">
    <property type="entry name" value="PHOSPHORIBOSYLFORMYLGLYCINAMIDINE SYNTHASE SUBUNIT PURQ"/>
    <property type="match status" value="1"/>
</dbReference>
<dbReference type="PANTHER" id="PTHR47552:SF1">
    <property type="entry name" value="PHOSPHORIBOSYLFORMYLGLYCINAMIDINE SYNTHASE SUBUNIT PURQ"/>
    <property type="match status" value="1"/>
</dbReference>
<dbReference type="Pfam" id="PF13507">
    <property type="entry name" value="GATase_5"/>
    <property type="match status" value="1"/>
</dbReference>
<dbReference type="PIRSF" id="PIRSF001586">
    <property type="entry name" value="FGAM_synth_I"/>
    <property type="match status" value="1"/>
</dbReference>
<dbReference type="SMART" id="SM01211">
    <property type="entry name" value="GATase_5"/>
    <property type="match status" value="1"/>
</dbReference>
<dbReference type="SUPFAM" id="SSF52317">
    <property type="entry name" value="Class I glutamine amidotransferase-like"/>
    <property type="match status" value="1"/>
</dbReference>
<dbReference type="PROSITE" id="PS51273">
    <property type="entry name" value="GATASE_TYPE_1"/>
    <property type="match status" value="1"/>
</dbReference>
<protein>
    <recommendedName>
        <fullName evidence="1">Phosphoribosylformylglycinamidine synthase subunit PurQ</fullName>
        <shortName evidence="1">FGAM synthase</shortName>
        <ecNumber evidence="1">6.3.5.3</ecNumber>
    </recommendedName>
    <alternativeName>
        <fullName evidence="1">Formylglycinamide ribonucleotide amidotransferase subunit I</fullName>
        <shortName evidence="1">FGAR amidotransferase I</shortName>
        <shortName evidence="1">FGAR-AT I</shortName>
    </alternativeName>
    <alternativeName>
        <fullName evidence="1">Glutaminase PurQ</fullName>
        <ecNumber evidence="1">3.5.1.2</ecNumber>
    </alternativeName>
    <alternativeName>
        <fullName evidence="1">Phosphoribosylformylglycinamidine synthase subunit I</fullName>
    </alternativeName>
</protein>
<name>PURQ_MOOTA</name>
<accession>Q2RGU4</accession>
<reference key="1">
    <citation type="journal article" date="2008" name="Environ. Microbiol.">
        <title>The complete genome sequence of Moorella thermoacetica (f. Clostridium thermoaceticum).</title>
        <authorList>
            <person name="Pierce E."/>
            <person name="Xie G."/>
            <person name="Barabote R.D."/>
            <person name="Saunders E."/>
            <person name="Han C.S."/>
            <person name="Detter J.C."/>
            <person name="Richardson P."/>
            <person name="Brettin T.S."/>
            <person name="Das A."/>
            <person name="Ljungdahl L.G."/>
            <person name="Ragsdale S.W."/>
        </authorList>
    </citation>
    <scope>NUCLEOTIDE SEQUENCE [LARGE SCALE GENOMIC DNA]</scope>
    <source>
        <strain>ATCC 39073 / JCM 9320</strain>
    </source>
</reference>
<gene>
    <name evidence="1" type="primary">purQ</name>
    <name type="ordered locus">Moth_2049</name>
</gene>
<organism>
    <name type="scientific">Moorella thermoacetica (strain ATCC 39073 / JCM 9320)</name>
    <dbReference type="NCBI Taxonomy" id="264732"/>
    <lineage>
        <taxon>Bacteria</taxon>
        <taxon>Bacillati</taxon>
        <taxon>Bacillota</taxon>
        <taxon>Clostridia</taxon>
        <taxon>Moorellales</taxon>
        <taxon>Moorellaceae</taxon>
        <taxon>Moorella</taxon>
    </lineage>
</organism>
<evidence type="ECO:0000255" key="1">
    <source>
        <dbReference type="HAMAP-Rule" id="MF_00421"/>
    </source>
</evidence>
<feature type="chain" id="PRO_0000252712" description="Phosphoribosylformylglycinamidine synthase subunit PurQ">
    <location>
        <begin position="1"/>
        <end position="236"/>
    </location>
</feature>
<feature type="domain" description="Glutamine amidotransferase type-1" evidence="1">
    <location>
        <begin position="3"/>
        <end position="234"/>
    </location>
</feature>
<feature type="active site" description="Nucleophile" evidence="1">
    <location>
        <position position="86"/>
    </location>
</feature>
<feature type="active site" evidence="1">
    <location>
        <position position="203"/>
    </location>
</feature>
<feature type="active site" evidence="1">
    <location>
        <position position="205"/>
    </location>
</feature>
<sequence length="236" mass="25444">MKFGVIVFPGSNCDQDVHYALGSVLGQNVDYLWHGDTSVSGYDCLILPGGFSYGDYLRAGAIARFAPIMPAVIDFARSGGLVLGICNGFQILLEAGLLPGAMMRNACLQFRCQWTCLKVDNNATPFTNRFREGQVVRIPIAHGEGNYYADAATLAQLEANRQIIFRYCSPDGEVTPAANPNGSVGNIAGIINREGNVLGMMPHPERCAEGILGGSDGRELLASIVDWWERGERLGA</sequence>